<dbReference type="EMBL" id="AF055586">
    <property type="protein sequence ID" value="AAC38421.1"/>
    <property type="molecule type" value="Genomic_DNA"/>
</dbReference>
<dbReference type="EMBL" id="AF179591">
    <property type="protein sequence ID" value="AAD53320.1"/>
    <property type="molecule type" value="Genomic_DNA"/>
</dbReference>
<dbReference type="EMBL" id="AE003853">
    <property type="status" value="NOT_ANNOTATED_CDS"/>
    <property type="molecule type" value="Genomic_DNA"/>
</dbReference>
<dbReference type="RefSeq" id="WP_001894072.1">
    <property type="nucleotide sequence ID" value="NZ_LT906615.1"/>
</dbReference>
<dbReference type="SMR" id="O68844"/>
<dbReference type="GeneID" id="94015623"/>
<dbReference type="Proteomes" id="UP000000584">
    <property type="component" value="Chromosome 2"/>
</dbReference>
<dbReference type="GO" id="GO:0005829">
    <property type="term" value="C:cytosol"/>
    <property type="evidence" value="ECO:0000318"/>
    <property type="project" value="GO_Central"/>
</dbReference>
<dbReference type="GO" id="GO:0043022">
    <property type="term" value="F:ribosome binding"/>
    <property type="evidence" value="ECO:0000318"/>
    <property type="project" value="GO_Central"/>
</dbReference>
<dbReference type="GO" id="GO:0003743">
    <property type="term" value="F:translation initiation factor activity"/>
    <property type="evidence" value="ECO:0000318"/>
    <property type="project" value="GO_Central"/>
</dbReference>
<dbReference type="GO" id="GO:0032790">
    <property type="term" value="P:ribosome disassembly"/>
    <property type="evidence" value="ECO:0000318"/>
    <property type="project" value="GO_Central"/>
</dbReference>
<dbReference type="FunFam" id="3.10.20.80:FF:000001">
    <property type="entry name" value="Translation initiation factor IF-3"/>
    <property type="match status" value="1"/>
</dbReference>
<dbReference type="FunFam" id="3.30.110.10:FF:000001">
    <property type="entry name" value="Translation initiation factor IF-3"/>
    <property type="match status" value="1"/>
</dbReference>
<dbReference type="Gene3D" id="3.30.110.10">
    <property type="entry name" value="Translation initiation factor 3 (IF-3), C-terminal domain"/>
    <property type="match status" value="1"/>
</dbReference>
<dbReference type="Gene3D" id="3.10.20.80">
    <property type="entry name" value="Translation initiation factor 3 (IF-3), N-terminal domain"/>
    <property type="match status" value="1"/>
</dbReference>
<dbReference type="HAMAP" id="MF_00080">
    <property type="entry name" value="IF_3"/>
    <property type="match status" value="1"/>
</dbReference>
<dbReference type="InterPro" id="IPR036788">
    <property type="entry name" value="T_IF-3_C_sf"/>
</dbReference>
<dbReference type="InterPro" id="IPR036787">
    <property type="entry name" value="T_IF-3_N_sf"/>
</dbReference>
<dbReference type="InterPro" id="IPR019813">
    <property type="entry name" value="Translation_initiation_fac3_CS"/>
</dbReference>
<dbReference type="InterPro" id="IPR001288">
    <property type="entry name" value="Translation_initiation_fac_3"/>
</dbReference>
<dbReference type="InterPro" id="IPR019815">
    <property type="entry name" value="Translation_initiation_fac_3_C"/>
</dbReference>
<dbReference type="InterPro" id="IPR019814">
    <property type="entry name" value="Translation_initiation_fac_3_N"/>
</dbReference>
<dbReference type="NCBIfam" id="TIGR00168">
    <property type="entry name" value="infC"/>
    <property type="match status" value="1"/>
</dbReference>
<dbReference type="PANTHER" id="PTHR10938">
    <property type="entry name" value="TRANSLATION INITIATION FACTOR IF-3"/>
    <property type="match status" value="1"/>
</dbReference>
<dbReference type="PANTHER" id="PTHR10938:SF0">
    <property type="entry name" value="TRANSLATION INITIATION FACTOR IF-3, MITOCHONDRIAL"/>
    <property type="match status" value="1"/>
</dbReference>
<dbReference type="Pfam" id="PF00707">
    <property type="entry name" value="IF3_C"/>
    <property type="match status" value="1"/>
</dbReference>
<dbReference type="Pfam" id="PF05198">
    <property type="entry name" value="IF3_N"/>
    <property type="match status" value="1"/>
</dbReference>
<dbReference type="SUPFAM" id="SSF55200">
    <property type="entry name" value="Translation initiation factor IF3, C-terminal domain"/>
    <property type="match status" value="1"/>
</dbReference>
<dbReference type="SUPFAM" id="SSF54364">
    <property type="entry name" value="Translation initiation factor IF3, N-terminal domain"/>
    <property type="match status" value="1"/>
</dbReference>
<dbReference type="PROSITE" id="PS00938">
    <property type="entry name" value="IF3"/>
    <property type="match status" value="1"/>
</dbReference>
<gene>
    <name evidence="1" type="primary">infC</name>
    <name type="ordered locus">VC_A0288</name>
</gene>
<sequence>MKGGRRGQVPVKQNQHRLNGEIRGVREVRLTGADGESVGIVSIQEALATAEESGLDLVEISPNAEPPVCRVMDYGKFLFEKSKATKEQKKKQKQIQIKELKFRPGTDVGDYQVKLRNLIRFLEEGNKVKVTIRFRGREMAHQDIGVDVLNRLKEDTDEFAVVESFPTKIEARQMIMVLAPKKK</sequence>
<proteinExistence type="inferred from homology"/>
<reference key="1">
    <citation type="journal article" date="1998" name="Science">
        <title>A distinctive class of integron in the Vibrio cholerae genome.</title>
        <authorList>
            <person name="Mazel D."/>
            <person name="Dychinco B."/>
            <person name="Webb V.A."/>
            <person name="Davies J."/>
        </authorList>
    </citation>
    <scope>NUCLEOTIDE SEQUENCE [GENOMIC DNA]</scope>
</reference>
<reference key="2">
    <citation type="submission" date="1999-08" db="EMBL/GenBank/DDBJ databases">
        <title>The Vibrio cholerea mega-integron.</title>
        <authorList>
            <person name="Clark C.A."/>
            <person name="Manning P.A."/>
        </authorList>
    </citation>
    <scope>NUCLEOTIDE SEQUENCE [GENOMIC DNA]</scope>
</reference>
<reference key="3">
    <citation type="journal article" date="2000" name="Nature">
        <title>DNA sequence of both chromosomes of the cholera pathogen Vibrio cholerae.</title>
        <authorList>
            <person name="Heidelberg J.F."/>
            <person name="Eisen J.A."/>
            <person name="Nelson W.C."/>
            <person name="Clayton R.A."/>
            <person name="Gwinn M.L."/>
            <person name="Dodson R.J."/>
            <person name="Haft D.H."/>
            <person name="Hickey E.K."/>
            <person name="Peterson J.D."/>
            <person name="Umayam L.A."/>
            <person name="Gill S.R."/>
            <person name="Nelson K.E."/>
            <person name="Read T.D."/>
            <person name="Tettelin H."/>
            <person name="Richardson D.L."/>
            <person name="Ermolaeva M.D."/>
            <person name="Vamathevan J.J."/>
            <person name="Bass S."/>
            <person name="Qin H."/>
            <person name="Dragoi I."/>
            <person name="Sellers P."/>
            <person name="McDonald L.A."/>
            <person name="Utterback T.R."/>
            <person name="Fleischmann R.D."/>
            <person name="Nierman W.C."/>
            <person name="White O."/>
            <person name="Salzberg S.L."/>
            <person name="Smith H.O."/>
            <person name="Colwell R.R."/>
            <person name="Mekalanos J.J."/>
            <person name="Venter J.C."/>
            <person name="Fraser C.M."/>
        </authorList>
    </citation>
    <scope>NUCLEOTIDE SEQUENCE [LARGE SCALE GENOMIC DNA]</scope>
    <source>
        <strain>ATCC 39315 / El Tor Inaba N16961</strain>
    </source>
</reference>
<evidence type="ECO:0000255" key="1">
    <source>
        <dbReference type="HAMAP-Rule" id="MF_00080"/>
    </source>
</evidence>
<feature type="chain" id="PRO_0000177604" description="Translation initiation factor IF-3">
    <location>
        <begin position="1"/>
        <end position="183"/>
    </location>
</feature>
<accession>O68844</accession>
<protein>
    <recommendedName>
        <fullName evidence="1">Translation initiation factor IF-3</fullName>
    </recommendedName>
</protein>
<comment type="function">
    <text evidence="1">IF-3 binds to the 30S ribosomal subunit and shifts the equilibrium between 70S ribosomes and their 50S and 30S subunits in favor of the free subunits, thus enhancing the availability of 30S subunits on which protein synthesis initiation begins.</text>
</comment>
<comment type="subunit">
    <text evidence="1">Monomer.</text>
</comment>
<comment type="subcellular location">
    <subcellularLocation>
        <location evidence="1">Cytoplasm</location>
    </subcellularLocation>
</comment>
<comment type="similarity">
    <text evidence="1">Belongs to the IF-3 family.</text>
</comment>
<organism>
    <name type="scientific">Vibrio cholerae serotype O1 (strain ATCC 39315 / El Tor Inaba N16961)</name>
    <dbReference type="NCBI Taxonomy" id="243277"/>
    <lineage>
        <taxon>Bacteria</taxon>
        <taxon>Pseudomonadati</taxon>
        <taxon>Pseudomonadota</taxon>
        <taxon>Gammaproteobacteria</taxon>
        <taxon>Vibrionales</taxon>
        <taxon>Vibrionaceae</taxon>
        <taxon>Vibrio</taxon>
    </lineage>
</organism>
<keyword id="KW-0963">Cytoplasm</keyword>
<keyword id="KW-0396">Initiation factor</keyword>
<keyword id="KW-0648">Protein biosynthesis</keyword>
<keyword id="KW-1185">Reference proteome</keyword>
<name>IF3_VIBCH</name>